<name>MUG_ENT38</name>
<evidence type="ECO:0000255" key="1">
    <source>
        <dbReference type="HAMAP-Rule" id="MF_01956"/>
    </source>
</evidence>
<dbReference type="EC" id="3.2.2.28" evidence="1"/>
<dbReference type="EMBL" id="CP000653">
    <property type="protein sequence ID" value="ABP62133.1"/>
    <property type="molecule type" value="Genomic_DNA"/>
</dbReference>
<dbReference type="RefSeq" id="WP_015960460.1">
    <property type="nucleotide sequence ID" value="NC_009436.1"/>
</dbReference>
<dbReference type="SMR" id="A4WEK3"/>
<dbReference type="STRING" id="399742.Ent638_3474"/>
<dbReference type="KEGG" id="ent:Ent638_3474"/>
<dbReference type="eggNOG" id="COG3663">
    <property type="taxonomic scope" value="Bacteria"/>
</dbReference>
<dbReference type="HOGENOM" id="CLU_042829_3_1_6"/>
<dbReference type="OrthoDB" id="9799921at2"/>
<dbReference type="Proteomes" id="UP000000230">
    <property type="component" value="Chromosome"/>
</dbReference>
<dbReference type="GO" id="GO:0005737">
    <property type="term" value="C:cytoplasm"/>
    <property type="evidence" value="ECO:0007669"/>
    <property type="project" value="UniProtKB-SubCell"/>
</dbReference>
<dbReference type="GO" id="GO:0003677">
    <property type="term" value="F:DNA binding"/>
    <property type="evidence" value="ECO:0007669"/>
    <property type="project" value="UniProtKB-KW"/>
</dbReference>
<dbReference type="GO" id="GO:0008263">
    <property type="term" value="F:pyrimidine-specific mismatch base pair DNA N-glycosylase activity"/>
    <property type="evidence" value="ECO:0007669"/>
    <property type="project" value="UniProtKB-UniRule"/>
</dbReference>
<dbReference type="GO" id="GO:0004844">
    <property type="term" value="F:uracil DNA N-glycosylase activity"/>
    <property type="evidence" value="ECO:0007669"/>
    <property type="project" value="TreeGrafter"/>
</dbReference>
<dbReference type="GO" id="GO:0006285">
    <property type="term" value="P:base-excision repair, AP site formation"/>
    <property type="evidence" value="ECO:0007669"/>
    <property type="project" value="UniProtKB-UniRule"/>
</dbReference>
<dbReference type="CDD" id="cd10028">
    <property type="entry name" value="UDG-F2_TDG_MUG"/>
    <property type="match status" value="1"/>
</dbReference>
<dbReference type="Gene3D" id="3.40.470.10">
    <property type="entry name" value="Uracil-DNA glycosylase-like domain"/>
    <property type="match status" value="1"/>
</dbReference>
<dbReference type="HAMAP" id="MF_01956">
    <property type="entry name" value="MUG"/>
    <property type="match status" value="1"/>
</dbReference>
<dbReference type="InterPro" id="IPR015637">
    <property type="entry name" value="MUG/TDG"/>
</dbReference>
<dbReference type="InterPro" id="IPR023502">
    <property type="entry name" value="MUG_bact"/>
</dbReference>
<dbReference type="InterPro" id="IPR005122">
    <property type="entry name" value="Uracil-DNA_glycosylase-like"/>
</dbReference>
<dbReference type="InterPro" id="IPR036895">
    <property type="entry name" value="Uracil-DNA_glycosylase-like_sf"/>
</dbReference>
<dbReference type="NCBIfam" id="NF007570">
    <property type="entry name" value="PRK10201.1"/>
    <property type="match status" value="1"/>
</dbReference>
<dbReference type="PANTHER" id="PTHR12159">
    <property type="entry name" value="G/T AND G/U MISMATCH-SPECIFIC DNA GLYCOSYLASE"/>
    <property type="match status" value="1"/>
</dbReference>
<dbReference type="PANTHER" id="PTHR12159:SF9">
    <property type="entry name" value="G_T MISMATCH-SPECIFIC THYMINE DNA GLYCOSYLASE"/>
    <property type="match status" value="1"/>
</dbReference>
<dbReference type="Pfam" id="PF03167">
    <property type="entry name" value="UDG"/>
    <property type="match status" value="1"/>
</dbReference>
<dbReference type="SMART" id="SM00986">
    <property type="entry name" value="UDG"/>
    <property type="match status" value="1"/>
</dbReference>
<dbReference type="SMART" id="SM00987">
    <property type="entry name" value="UreE_C"/>
    <property type="match status" value="1"/>
</dbReference>
<dbReference type="SUPFAM" id="SSF52141">
    <property type="entry name" value="Uracil-DNA glycosylase-like"/>
    <property type="match status" value="1"/>
</dbReference>
<protein>
    <recommendedName>
        <fullName evidence="1">G/U mismatch-specific DNA glycosylase</fullName>
        <ecNumber evidence="1">3.2.2.28</ecNumber>
    </recommendedName>
    <alternativeName>
        <fullName evidence="1">Double-strand-specific uracil glycosylase</fullName>
    </alternativeName>
    <alternativeName>
        <fullName evidence="1">Mismatch-specific uracil DNA-glycosylase</fullName>
        <shortName evidence="1">MUG</shortName>
    </alternativeName>
</protein>
<proteinExistence type="inferred from homology"/>
<sequence>MINDILAPGLRVVFCGINPGKSSAHTGFHFAHPGNRFWKVIHQAGFTDKLLKPEEEQHLLDTRCGITMLVERPTVQANEVNLHELRSGGRELVKKIEDYQPAALAILGKQAYEQAFSQRGAQWGKQRITIGMTQVWVLPNPSGLNRATLDKLVEAYRELDEALVVRGR</sequence>
<gene>
    <name evidence="1" type="primary">mug</name>
    <name type="ordered locus">Ent638_3474</name>
</gene>
<reference key="1">
    <citation type="journal article" date="2010" name="PLoS Genet.">
        <title>Genome sequence of the plant growth promoting endophytic bacterium Enterobacter sp. 638.</title>
        <authorList>
            <person name="Taghavi S."/>
            <person name="van der Lelie D."/>
            <person name="Hoffman A."/>
            <person name="Zhang Y.B."/>
            <person name="Walla M.D."/>
            <person name="Vangronsveld J."/>
            <person name="Newman L."/>
            <person name="Monchy S."/>
        </authorList>
    </citation>
    <scope>NUCLEOTIDE SEQUENCE [LARGE SCALE GENOMIC DNA]</scope>
    <source>
        <strain>638</strain>
    </source>
</reference>
<accession>A4WEK3</accession>
<feature type="chain" id="PRO_1000070792" description="G/U mismatch-specific DNA glycosylase">
    <location>
        <begin position="1"/>
        <end position="168"/>
    </location>
</feature>
<organism>
    <name type="scientific">Enterobacter sp. (strain 638)</name>
    <dbReference type="NCBI Taxonomy" id="399742"/>
    <lineage>
        <taxon>Bacteria</taxon>
        <taxon>Pseudomonadati</taxon>
        <taxon>Pseudomonadota</taxon>
        <taxon>Gammaproteobacteria</taxon>
        <taxon>Enterobacterales</taxon>
        <taxon>Enterobacteriaceae</taxon>
        <taxon>Enterobacter</taxon>
    </lineage>
</organism>
<keyword id="KW-0963">Cytoplasm</keyword>
<keyword id="KW-0227">DNA damage</keyword>
<keyword id="KW-0228">DNA excision</keyword>
<keyword id="KW-0234">DNA repair</keyword>
<keyword id="KW-0238">DNA-binding</keyword>
<keyword id="KW-0378">Hydrolase</keyword>
<comment type="function">
    <text evidence="1">Excises ethenocytosine and uracil, which can arise by alkylation or deamination of cytosine, respectively, from the corresponding mispairs with guanine in ds-DNA. It is capable of hydrolyzing the carbon-nitrogen bond between the sugar-phosphate backbone of the DNA and the mispaired base. The complementary strand guanine functions in substrate recognition. Required for DNA damage lesion repair in stationary-phase cells.</text>
</comment>
<comment type="catalytic activity">
    <reaction evidence="1">
        <text>Specifically hydrolyzes mismatched double-stranded DNA and polynucleotides, releasing free uracil.</text>
        <dbReference type="EC" id="3.2.2.28"/>
    </reaction>
</comment>
<comment type="subunit">
    <text evidence="1">Binds DNA as a monomer.</text>
</comment>
<comment type="subcellular location">
    <subcellularLocation>
        <location evidence="1">Cytoplasm</location>
    </subcellularLocation>
</comment>
<comment type="similarity">
    <text evidence="1">Belongs to the uracil-DNA glycosylase (UDG) superfamily. TDG/mug family.</text>
</comment>